<name>TRUA_NEIG2</name>
<reference key="1">
    <citation type="journal article" date="2008" name="J. Bacteriol.">
        <title>Complete genome sequence of Neisseria gonorrhoeae NCCP11945.</title>
        <authorList>
            <person name="Chung G.T."/>
            <person name="Yoo J.S."/>
            <person name="Oh H.B."/>
            <person name="Lee Y.S."/>
            <person name="Cha S.H."/>
            <person name="Kim S.J."/>
            <person name="Yoo C.K."/>
        </authorList>
    </citation>
    <scope>NUCLEOTIDE SEQUENCE [LARGE SCALE GENOMIC DNA]</scope>
    <source>
        <strain>NCCP11945</strain>
    </source>
</reference>
<proteinExistence type="inferred from homology"/>
<keyword id="KW-0413">Isomerase</keyword>
<keyword id="KW-0819">tRNA processing</keyword>
<dbReference type="EC" id="5.4.99.12" evidence="1"/>
<dbReference type="EMBL" id="CP001050">
    <property type="protein sequence ID" value="ACF31061.1"/>
    <property type="molecule type" value="Genomic_DNA"/>
</dbReference>
<dbReference type="RefSeq" id="WP_003690045.1">
    <property type="nucleotide sequence ID" value="NC_011035.1"/>
</dbReference>
<dbReference type="SMR" id="B4RR02"/>
<dbReference type="GeneID" id="66754328"/>
<dbReference type="KEGG" id="ngk:NGK_2460"/>
<dbReference type="HOGENOM" id="CLU_014673_0_2_4"/>
<dbReference type="Proteomes" id="UP000002564">
    <property type="component" value="Chromosome"/>
</dbReference>
<dbReference type="GO" id="GO:0003723">
    <property type="term" value="F:RNA binding"/>
    <property type="evidence" value="ECO:0007669"/>
    <property type="project" value="InterPro"/>
</dbReference>
<dbReference type="GO" id="GO:0160147">
    <property type="term" value="F:tRNA pseudouridine(38-40) synthase activity"/>
    <property type="evidence" value="ECO:0007669"/>
    <property type="project" value="UniProtKB-EC"/>
</dbReference>
<dbReference type="GO" id="GO:0031119">
    <property type="term" value="P:tRNA pseudouridine synthesis"/>
    <property type="evidence" value="ECO:0007669"/>
    <property type="project" value="UniProtKB-UniRule"/>
</dbReference>
<dbReference type="CDD" id="cd02570">
    <property type="entry name" value="PseudoU_synth_EcTruA"/>
    <property type="match status" value="1"/>
</dbReference>
<dbReference type="FunFam" id="3.30.70.580:FF:000001">
    <property type="entry name" value="tRNA pseudouridine synthase A"/>
    <property type="match status" value="1"/>
</dbReference>
<dbReference type="FunFam" id="3.30.70.660:FF:000016">
    <property type="entry name" value="tRNA pseudouridine synthase A"/>
    <property type="match status" value="1"/>
</dbReference>
<dbReference type="Gene3D" id="3.30.70.660">
    <property type="entry name" value="Pseudouridine synthase I, catalytic domain, C-terminal subdomain"/>
    <property type="match status" value="1"/>
</dbReference>
<dbReference type="Gene3D" id="3.30.70.580">
    <property type="entry name" value="Pseudouridine synthase I, catalytic domain, N-terminal subdomain"/>
    <property type="match status" value="1"/>
</dbReference>
<dbReference type="HAMAP" id="MF_00171">
    <property type="entry name" value="TruA"/>
    <property type="match status" value="1"/>
</dbReference>
<dbReference type="InterPro" id="IPR020103">
    <property type="entry name" value="PsdUridine_synth_cat_dom_sf"/>
</dbReference>
<dbReference type="InterPro" id="IPR001406">
    <property type="entry name" value="PsdUridine_synth_TruA"/>
</dbReference>
<dbReference type="InterPro" id="IPR020097">
    <property type="entry name" value="PsdUridine_synth_TruA_a/b_dom"/>
</dbReference>
<dbReference type="InterPro" id="IPR020095">
    <property type="entry name" value="PsdUridine_synth_TruA_C"/>
</dbReference>
<dbReference type="InterPro" id="IPR020094">
    <property type="entry name" value="TruA/RsuA/RluB/E/F_N"/>
</dbReference>
<dbReference type="NCBIfam" id="TIGR00071">
    <property type="entry name" value="hisT_truA"/>
    <property type="match status" value="1"/>
</dbReference>
<dbReference type="PANTHER" id="PTHR11142">
    <property type="entry name" value="PSEUDOURIDYLATE SYNTHASE"/>
    <property type="match status" value="1"/>
</dbReference>
<dbReference type="PANTHER" id="PTHR11142:SF0">
    <property type="entry name" value="TRNA PSEUDOURIDINE SYNTHASE-LIKE 1"/>
    <property type="match status" value="1"/>
</dbReference>
<dbReference type="Pfam" id="PF01416">
    <property type="entry name" value="PseudoU_synth_1"/>
    <property type="match status" value="2"/>
</dbReference>
<dbReference type="PIRSF" id="PIRSF001430">
    <property type="entry name" value="tRNA_psdUrid_synth"/>
    <property type="match status" value="1"/>
</dbReference>
<dbReference type="SUPFAM" id="SSF55120">
    <property type="entry name" value="Pseudouridine synthase"/>
    <property type="match status" value="1"/>
</dbReference>
<feature type="chain" id="PRO_1000097765" description="tRNA pseudouridine synthase A">
    <location>
        <begin position="1"/>
        <end position="265"/>
    </location>
</feature>
<feature type="active site" description="Nucleophile" evidence="1">
    <location>
        <position position="58"/>
    </location>
</feature>
<feature type="binding site" evidence="1">
    <location>
        <position position="116"/>
    </location>
    <ligand>
        <name>substrate</name>
    </ligand>
</feature>
<sequence length="265" mass="29038">MDTAQKQRWAITLSYDGSRFYGWQKQAGGVPTVQAALETALARIAGESVATTVAGRTDTGVHAAAQVVHFDITAARPQQAWVRGVNAHLPEGIAVLHARQVAPGFHARFDAYGRHYRYLLESAPVRSPLLKNRAGWTHLKLDIEPMRRAAALLIGEQDFSSFRAAGCQAKSPVKTIYRTDLTQSAGLIRLDLHGNAFLHHMVRNIMGALVYVGSGRLSVEGFAALIQERSRLKAPPTFMPDGLYLTGVDYPGAYGIVRPQIPEWL</sequence>
<protein>
    <recommendedName>
        <fullName evidence="1">tRNA pseudouridine synthase A</fullName>
        <ecNumber evidence="1">5.4.99.12</ecNumber>
    </recommendedName>
    <alternativeName>
        <fullName evidence="1">tRNA pseudouridine(38-40) synthase</fullName>
    </alternativeName>
    <alternativeName>
        <fullName evidence="1">tRNA pseudouridylate synthase I</fullName>
    </alternativeName>
    <alternativeName>
        <fullName evidence="1">tRNA-uridine isomerase I</fullName>
    </alternativeName>
</protein>
<comment type="function">
    <text evidence="1">Formation of pseudouridine at positions 38, 39 and 40 in the anticodon stem and loop of transfer RNAs.</text>
</comment>
<comment type="catalytic activity">
    <reaction evidence="1">
        <text>uridine(38/39/40) in tRNA = pseudouridine(38/39/40) in tRNA</text>
        <dbReference type="Rhea" id="RHEA:22376"/>
        <dbReference type="Rhea" id="RHEA-COMP:10085"/>
        <dbReference type="Rhea" id="RHEA-COMP:10087"/>
        <dbReference type="ChEBI" id="CHEBI:65314"/>
        <dbReference type="ChEBI" id="CHEBI:65315"/>
        <dbReference type="EC" id="5.4.99.12"/>
    </reaction>
</comment>
<comment type="subunit">
    <text evidence="1">Homodimer.</text>
</comment>
<comment type="similarity">
    <text evidence="1">Belongs to the tRNA pseudouridine synthase TruA family.</text>
</comment>
<organism>
    <name type="scientific">Neisseria gonorrhoeae (strain NCCP11945)</name>
    <dbReference type="NCBI Taxonomy" id="521006"/>
    <lineage>
        <taxon>Bacteria</taxon>
        <taxon>Pseudomonadati</taxon>
        <taxon>Pseudomonadota</taxon>
        <taxon>Betaproteobacteria</taxon>
        <taxon>Neisseriales</taxon>
        <taxon>Neisseriaceae</taxon>
        <taxon>Neisseria</taxon>
    </lineage>
</organism>
<evidence type="ECO:0000255" key="1">
    <source>
        <dbReference type="HAMAP-Rule" id="MF_00171"/>
    </source>
</evidence>
<gene>
    <name evidence="1" type="primary">truA</name>
    <name type="ordered locus">NGK_2460</name>
</gene>
<accession>B4RR02</accession>